<protein>
    <recommendedName>
        <fullName>Aspartate aminotransferase</fullName>
        <shortName>AspAT</shortName>
        <ecNumber>2.6.1.1</ecNumber>
    </recommendedName>
    <alternativeName>
        <fullName>Transaminase A</fullName>
    </alternativeName>
</protein>
<name>AAT_PYRHO</name>
<gene>
    <name type="primary">aspC</name>
    <name type="ordered locus">PH0771</name>
</gene>
<keyword id="KW-0032">Aminotransferase</keyword>
<keyword id="KW-0963">Cytoplasm</keyword>
<keyword id="KW-0663">Pyridoxal phosphate</keyword>
<keyword id="KW-0808">Transferase</keyword>
<dbReference type="EC" id="2.6.1.1"/>
<dbReference type="EMBL" id="BA000001">
    <property type="protein sequence ID" value="BAA29863.1"/>
    <property type="molecule type" value="Genomic_DNA"/>
</dbReference>
<dbReference type="PIR" id="E71125">
    <property type="entry name" value="E71125"/>
</dbReference>
<dbReference type="RefSeq" id="WP_010884863.1">
    <property type="nucleotide sequence ID" value="NC_000961.1"/>
</dbReference>
<dbReference type="SMR" id="O58489"/>
<dbReference type="STRING" id="70601.gene:9377720"/>
<dbReference type="EnsemblBacteria" id="BAA29863">
    <property type="protein sequence ID" value="BAA29863"/>
    <property type="gene ID" value="BAA29863"/>
</dbReference>
<dbReference type="GeneID" id="1443098"/>
<dbReference type="KEGG" id="pho:PH0771"/>
<dbReference type="eggNOG" id="arCOG01130">
    <property type="taxonomic scope" value="Archaea"/>
</dbReference>
<dbReference type="OrthoDB" id="372018at2157"/>
<dbReference type="Proteomes" id="UP000000752">
    <property type="component" value="Chromosome"/>
</dbReference>
<dbReference type="GO" id="GO:0005737">
    <property type="term" value="C:cytoplasm"/>
    <property type="evidence" value="ECO:0007669"/>
    <property type="project" value="UniProtKB-SubCell"/>
</dbReference>
<dbReference type="GO" id="GO:0004069">
    <property type="term" value="F:L-aspartate:2-oxoglutarate aminotransferase activity"/>
    <property type="evidence" value="ECO:0007669"/>
    <property type="project" value="UniProtKB-EC"/>
</dbReference>
<dbReference type="GO" id="GO:0030170">
    <property type="term" value="F:pyridoxal phosphate binding"/>
    <property type="evidence" value="ECO:0007669"/>
    <property type="project" value="InterPro"/>
</dbReference>
<dbReference type="GO" id="GO:0006520">
    <property type="term" value="P:amino acid metabolic process"/>
    <property type="evidence" value="ECO:0007669"/>
    <property type="project" value="InterPro"/>
</dbReference>
<dbReference type="GO" id="GO:0009058">
    <property type="term" value="P:biosynthetic process"/>
    <property type="evidence" value="ECO:0007669"/>
    <property type="project" value="InterPro"/>
</dbReference>
<dbReference type="CDD" id="cd00609">
    <property type="entry name" value="AAT_like"/>
    <property type="match status" value="1"/>
</dbReference>
<dbReference type="FunFam" id="3.40.640.10:FF:000033">
    <property type="entry name" value="Aspartate aminotransferase"/>
    <property type="match status" value="1"/>
</dbReference>
<dbReference type="Gene3D" id="3.90.1150.10">
    <property type="entry name" value="Aspartate Aminotransferase, domain 1"/>
    <property type="match status" value="1"/>
</dbReference>
<dbReference type="Gene3D" id="3.40.640.10">
    <property type="entry name" value="Type I PLP-dependent aspartate aminotransferase-like (Major domain)"/>
    <property type="match status" value="1"/>
</dbReference>
<dbReference type="InterPro" id="IPR004839">
    <property type="entry name" value="Aminotransferase_I/II_large"/>
</dbReference>
<dbReference type="InterPro" id="IPR050596">
    <property type="entry name" value="AspAT/PAT-like"/>
</dbReference>
<dbReference type="InterPro" id="IPR004838">
    <property type="entry name" value="NHTrfase_class1_PyrdxlP-BS"/>
</dbReference>
<dbReference type="InterPro" id="IPR015424">
    <property type="entry name" value="PyrdxlP-dep_Trfase"/>
</dbReference>
<dbReference type="InterPro" id="IPR015421">
    <property type="entry name" value="PyrdxlP-dep_Trfase_major"/>
</dbReference>
<dbReference type="InterPro" id="IPR015422">
    <property type="entry name" value="PyrdxlP-dep_Trfase_small"/>
</dbReference>
<dbReference type="NCBIfam" id="NF006229">
    <property type="entry name" value="PRK08361.1"/>
    <property type="match status" value="1"/>
</dbReference>
<dbReference type="PANTHER" id="PTHR46383">
    <property type="entry name" value="ASPARTATE AMINOTRANSFERASE"/>
    <property type="match status" value="1"/>
</dbReference>
<dbReference type="PANTHER" id="PTHR46383:SF3">
    <property type="entry name" value="ASPARTATE AMINOTRANSFERASE-RELATED"/>
    <property type="match status" value="1"/>
</dbReference>
<dbReference type="Pfam" id="PF00155">
    <property type="entry name" value="Aminotran_1_2"/>
    <property type="match status" value="1"/>
</dbReference>
<dbReference type="SUPFAM" id="SSF53383">
    <property type="entry name" value="PLP-dependent transferases"/>
    <property type="match status" value="1"/>
</dbReference>
<dbReference type="PROSITE" id="PS00105">
    <property type="entry name" value="AA_TRANSFER_CLASS_1"/>
    <property type="match status" value="1"/>
</dbReference>
<feature type="chain" id="PRO_0000123861" description="Aspartate aminotransferase">
    <location>
        <begin position="1"/>
        <end position="391"/>
    </location>
</feature>
<feature type="binding site" evidence="1">
    <location>
        <position position="40"/>
    </location>
    <ligand>
        <name>L-aspartate</name>
        <dbReference type="ChEBI" id="CHEBI:29991"/>
    </ligand>
</feature>
<feature type="binding site" evidence="1">
    <location>
        <position position="176"/>
    </location>
    <ligand>
        <name>L-aspartate</name>
        <dbReference type="ChEBI" id="CHEBI:29991"/>
    </ligand>
</feature>
<feature type="binding site" evidence="1">
    <location>
        <position position="366"/>
    </location>
    <ligand>
        <name>L-aspartate</name>
        <dbReference type="ChEBI" id="CHEBI:29991"/>
    </ligand>
</feature>
<feature type="modified residue" description="N6-(pyridoxal phosphate)lysine" evidence="1">
    <location>
        <position position="236"/>
    </location>
</feature>
<accession>O58489</accession>
<organism>
    <name type="scientific">Pyrococcus horikoshii (strain ATCC 700860 / DSM 12428 / JCM 9974 / NBRC 100139 / OT-3)</name>
    <dbReference type="NCBI Taxonomy" id="70601"/>
    <lineage>
        <taxon>Archaea</taxon>
        <taxon>Methanobacteriati</taxon>
        <taxon>Methanobacteriota</taxon>
        <taxon>Thermococci</taxon>
        <taxon>Thermococcales</taxon>
        <taxon>Thermococcaceae</taxon>
        <taxon>Pyrococcus</taxon>
    </lineage>
</organism>
<comment type="catalytic activity">
    <reaction>
        <text>L-aspartate + 2-oxoglutarate = oxaloacetate + L-glutamate</text>
        <dbReference type="Rhea" id="RHEA:21824"/>
        <dbReference type="ChEBI" id="CHEBI:16452"/>
        <dbReference type="ChEBI" id="CHEBI:16810"/>
        <dbReference type="ChEBI" id="CHEBI:29985"/>
        <dbReference type="ChEBI" id="CHEBI:29991"/>
        <dbReference type="EC" id="2.6.1.1"/>
    </reaction>
</comment>
<comment type="cofactor">
    <cofactor evidence="1">
        <name>pyridoxal 5'-phosphate</name>
        <dbReference type="ChEBI" id="CHEBI:597326"/>
    </cofactor>
</comment>
<comment type="subunit">
    <text evidence="1">Homodimer.</text>
</comment>
<comment type="subcellular location">
    <subcellularLocation>
        <location evidence="1">Cytoplasm</location>
    </subcellularLocation>
</comment>
<comment type="similarity">
    <text evidence="2">Belongs to the class-I pyridoxal-phosphate-dependent aminotransferase family.</text>
</comment>
<reference key="1">
    <citation type="journal article" date="1998" name="DNA Res.">
        <title>Complete sequence and gene organization of the genome of a hyper-thermophilic archaebacterium, Pyrococcus horikoshii OT3.</title>
        <authorList>
            <person name="Kawarabayasi Y."/>
            <person name="Sawada M."/>
            <person name="Horikawa H."/>
            <person name="Haikawa Y."/>
            <person name="Hino Y."/>
            <person name="Yamamoto S."/>
            <person name="Sekine M."/>
            <person name="Baba S."/>
            <person name="Kosugi H."/>
            <person name="Hosoyama A."/>
            <person name="Nagai Y."/>
            <person name="Sakai M."/>
            <person name="Ogura K."/>
            <person name="Otsuka R."/>
            <person name="Nakazawa H."/>
            <person name="Takamiya M."/>
            <person name="Ohfuku Y."/>
            <person name="Funahashi T."/>
            <person name="Tanaka T."/>
            <person name="Kudoh Y."/>
            <person name="Yamazaki J."/>
            <person name="Kushida N."/>
            <person name="Oguchi A."/>
            <person name="Aoki K."/>
            <person name="Yoshizawa T."/>
            <person name="Nakamura Y."/>
            <person name="Robb F.T."/>
            <person name="Horikoshi K."/>
            <person name="Masuchi Y."/>
            <person name="Shizuya H."/>
            <person name="Kikuchi H."/>
        </authorList>
    </citation>
    <scope>NUCLEOTIDE SEQUENCE [LARGE SCALE GENOMIC DNA]</scope>
    <source>
        <strain>ATCC 700860 / DSM 12428 / JCM 9974 / NBRC 100139 / OT-3</strain>
    </source>
</reference>
<sequence>MREKRKYFIAERVLLIKRSKIRELFERASKMEDVISLGIGEPDFDTPKNIKEAAKRALDEGWTHYTPNAGIPELREAVVEYYKKFYGIDIEVENVIITAGAYEGTYLAFESLLERGDEVIIPDPAFVSYAEDAKVAEAKPVRIPLREENNFLPDPNELLEKISKNTRMIVINYPNNPTGATLDKELAKTIADIAEDYNIYILSDEPYEHFIYEDAKHYPMIKFAPENTILANSFSKTFAMTGWRLGFVVAPSQVIKEMTKLHAYVIGNVASFVQIAGIEALRSEESWKAVEEMKKEYNERRKIVVKRLKNMPGIKVKEPKGAFYVFPNISGTGMSSEKFSEWLLEKARVVVIPGTAFGRMGEGYVRISYATSKEKLIEAMNRIEKALEGEK</sequence>
<proteinExistence type="inferred from homology"/>
<evidence type="ECO:0000250" key="1"/>
<evidence type="ECO:0000305" key="2"/>